<reference key="1">
    <citation type="journal article" date="2005" name="Nature">
        <title>Generation and annotation of the DNA sequences of human chromosomes 2 and 4.</title>
        <authorList>
            <person name="Hillier L.W."/>
            <person name="Graves T.A."/>
            <person name="Fulton R.S."/>
            <person name="Fulton L.A."/>
            <person name="Pepin K.H."/>
            <person name="Minx P."/>
            <person name="Wagner-McPherson C."/>
            <person name="Layman D."/>
            <person name="Wylie K."/>
            <person name="Sekhon M."/>
            <person name="Becker M.C."/>
            <person name="Fewell G.A."/>
            <person name="Delehaunty K.D."/>
            <person name="Miner T.L."/>
            <person name="Nash W.E."/>
            <person name="Kremitzki C."/>
            <person name="Oddy L."/>
            <person name="Du H."/>
            <person name="Sun H."/>
            <person name="Bradshaw-Cordum H."/>
            <person name="Ali J."/>
            <person name="Carter J."/>
            <person name="Cordes M."/>
            <person name="Harris A."/>
            <person name="Isak A."/>
            <person name="van Brunt A."/>
            <person name="Nguyen C."/>
            <person name="Du F."/>
            <person name="Courtney L."/>
            <person name="Kalicki J."/>
            <person name="Ozersky P."/>
            <person name="Abbott S."/>
            <person name="Armstrong J."/>
            <person name="Belter E.A."/>
            <person name="Caruso L."/>
            <person name="Cedroni M."/>
            <person name="Cotton M."/>
            <person name="Davidson T."/>
            <person name="Desai A."/>
            <person name="Elliott G."/>
            <person name="Erb T."/>
            <person name="Fronick C."/>
            <person name="Gaige T."/>
            <person name="Haakenson W."/>
            <person name="Haglund K."/>
            <person name="Holmes A."/>
            <person name="Harkins R."/>
            <person name="Kim K."/>
            <person name="Kruchowski S.S."/>
            <person name="Strong C.M."/>
            <person name="Grewal N."/>
            <person name="Goyea E."/>
            <person name="Hou S."/>
            <person name="Levy A."/>
            <person name="Martinka S."/>
            <person name="Mead K."/>
            <person name="McLellan M.D."/>
            <person name="Meyer R."/>
            <person name="Randall-Maher J."/>
            <person name="Tomlinson C."/>
            <person name="Dauphin-Kohlberg S."/>
            <person name="Kozlowicz-Reilly A."/>
            <person name="Shah N."/>
            <person name="Swearengen-Shahid S."/>
            <person name="Snider J."/>
            <person name="Strong J.T."/>
            <person name="Thompson J."/>
            <person name="Yoakum M."/>
            <person name="Leonard S."/>
            <person name="Pearman C."/>
            <person name="Trani L."/>
            <person name="Radionenko M."/>
            <person name="Waligorski J.E."/>
            <person name="Wang C."/>
            <person name="Rock S.M."/>
            <person name="Tin-Wollam A.-M."/>
            <person name="Maupin R."/>
            <person name="Latreille P."/>
            <person name="Wendl M.C."/>
            <person name="Yang S.-P."/>
            <person name="Pohl C."/>
            <person name="Wallis J.W."/>
            <person name="Spieth J."/>
            <person name="Bieri T.A."/>
            <person name="Berkowicz N."/>
            <person name="Nelson J.O."/>
            <person name="Osborne J."/>
            <person name="Ding L."/>
            <person name="Meyer R."/>
            <person name="Sabo A."/>
            <person name="Shotland Y."/>
            <person name="Sinha P."/>
            <person name="Wohldmann P.E."/>
            <person name="Cook L.L."/>
            <person name="Hickenbotham M.T."/>
            <person name="Eldred J."/>
            <person name="Williams D."/>
            <person name="Jones T.A."/>
            <person name="She X."/>
            <person name="Ciccarelli F.D."/>
            <person name="Izaurralde E."/>
            <person name="Taylor J."/>
            <person name="Schmutz J."/>
            <person name="Myers R.M."/>
            <person name="Cox D.R."/>
            <person name="Huang X."/>
            <person name="McPherson J.D."/>
            <person name="Mardis E.R."/>
            <person name="Clifton S.W."/>
            <person name="Warren W.C."/>
            <person name="Chinwalla A.T."/>
            <person name="Eddy S.R."/>
            <person name="Marra M.A."/>
            <person name="Ovcharenko I."/>
            <person name="Furey T.S."/>
            <person name="Miller W."/>
            <person name="Eichler E.E."/>
            <person name="Bork P."/>
            <person name="Suyama M."/>
            <person name="Torrents D."/>
            <person name="Waterston R.H."/>
            <person name="Wilson R.K."/>
        </authorList>
    </citation>
    <scope>NUCLEOTIDE SEQUENCE [LARGE SCALE GENOMIC DNA]</scope>
</reference>
<feature type="chain" id="PRO_0000421089" description="Ubiquitin carboxyl-terminal hydrolase 17-like protein 13">
    <location>
        <begin position="1"/>
        <end position="530"/>
    </location>
</feature>
<feature type="domain" description="USP">
    <location>
        <begin position="80"/>
        <end position="375"/>
    </location>
</feature>
<feature type="region of interest" description="Disordered" evidence="4">
    <location>
        <begin position="382"/>
        <end position="412"/>
    </location>
</feature>
<feature type="region of interest" description="Disordered" evidence="4">
    <location>
        <begin position="477"/>
        <end position="530"/>
    </location>
</feature>
<feature type="compositionally biased region" description="Basic and acidic residues" evidence="4">
    <location>
        <begin position="382"/>
        <end position="392"/>
    </location>
</feature>
<feature type="compositionally biased region" description="Basic and acidic residues" evidence="4">
    <location>
        <begin position="398"/>
        <end position="412"/>
    </location>
</feature>
<feature type="compositionally biased region" description="Polar residues" evidence="4">
    <location>
        <begin position="493"/>
        <end position="505"/>
    </location>
</feature>
<feature type="compositionally biased region" description="Basic residues" evidence="4">
    <location>
        <begin position="510"/>
        <end position="524"/>
    </location>
</feature>
<feature type="active site" description="Nucleophile" evidence="2 3">
    <location>
        <position position="89"/>
    </location>
</feature>
<feature type="active site" description="Proton acceptor" evidence="2 3">
    <location>
        <position position="334"/>
    </location>
</feature>
<keyword id="KW-0256">Endoplasmic reticulum</keyword>
<keyword id="KW-0378">Hydrolase</keyword>
<keyword id="KW-0539">Nucleus</keyword>
<keyword id="KW-0645">Protease</keyword>
<keyword id="KW-1185">Reference proteome</keyword>
<keyword id="KW-0788">Thiol protease</keyword>
<keyword id="KW-0833">Ubl conjugation pathway</keyword>
<protein>
    <recommendedName>
        <fullName>Ubiquitin carboxyl-terminal hydrolase 17-like protein 13</fullName>
        <ecNumber>3.4.19.12</ecNumber>
    </recommendedName>
</protein>
<accession>C9JLJ4</accession>
<gene>
    <name type="primary">USP17L13</name>
</gene>
<name>U17LD_HUMAN</name>
<evidence type="ECO:0000250" key="1"/>
<evidence type="ECO:0000255" key="2">
    <source>
        <dbReference type="PROSITE-ProRule" id="PRU10092"/>
    </source>
</evidence>
<evidence type="ECO:0000255" key="3">
    <source>
        <dbReference type="PROSITE-ProRule" id="PRU10093"/>
    </source>
</evidence>
<evidence type="ECO:0000256" key="4">
    <source>
        <dbReference type="SAM" id="MobiDB-lite"/>
    </source>
</evidence>
<evidence type="ECO:0000305" key="5"/>
<dbReference type="EC" id="3.4.19.12"/>
<dbReference type="EMBL" id="AC108519">
    <property type="status" value="NOT_ANNOTATED_CDS"/>
    <property type="molecule type" value="Genomic_DNA"/>
</dbReference>
<dbReference type="CCDS" id="CCDS59457.1"/>
<dbReference type="RefSeq" id="NP_001243784.1">
    <property type="nucleotide sequence ID" value="NM_001256855.1"/>
</dbReference>
<dbReference type="SMR" id="C9JLJ4"/>
<dbReference type="FunCoup" id="C9JLJ4">
    <property type="interactions" value="53"/>
</dbReference>
<dbReference type="IntAct" id="C9JLJ4">
    <property type="interactions" value="1"/>
</dbReference>
<dbReference type="STRING" id="9606.ENSP00000414392"/>
<dbReference type="MEROPS" id="C19.A82"/>
<dbReference type="MEROPS" id="C19.A90"/>
<dbReference type="BioMuta" id="USP17L13"/>
<dbReference type="jPOST" id="C9JLJ4"/>
<dbReference type="MassIVE" id="C9JLJ4"/>
<dbReference type="PaxDb" id="9606-ENSP00000414392"/>
<dbReference type="Antibodypedia" id="77580">
    <property type="antibodies" value="3 antibodies from 1 providers"/>
</dbReference>
<dbReference type="DNASU" id="100287238"/>
<dbReference type="Ensembl" id="ENST00000429667.1">
    <property type="protein sequence ID" value="ENSP00000414392.1"/>
    <property type="gene ID" value="ENSG00000232399.4"/>
</dbReference>
<dbReference type="GeneID" id="100287238"/>
<dbReference type="KEGG" id="hsa:100287238"/>
<dbReference type="MANE-Select" id="ENST00000429667.1">
    <property type="protein sequence ID" value="ENSP00000414392.1"/>
    <property type="RefSeq nucleotide sequence ID" value="NM_001256855.1"/>
    <property type="RefSeq protein sequence ID" value="NP_001243784.1"/>
</dbReference>
<dbReference type="UCSC" id="uc031sdj.1">
    <property type="organism name" value="human"/>
</dbReference>
<dbReference type="AGR" id="HGNC:44441"/>
<dbReference type="CTD" id="100287238"/>
<dbReference type="GeneCards" id="USP17L13"/>
<dbReference type="HGNC" id="HGNC:44441">
    <property type="gene designation" value="USP17L13"/>
</dbReference>
<dbReference type="HPA" id="ENSG00000232399">
    <property type="expression patterns" value="Not detected"/>
</dbReference>
<dbReference type="neXtProt" id="NX_C9JLJ4"/>
<dbReference type="VEuPathDB" id="HostDB:ENSG00000232399"/>
<dbReference type="eggNOG" id="KOG1865">
    <property type="taxonomic scope" value="Eukaryota"/>
</dbReference>
<dbReference type="GeneTree" id="ENSGT00940000161948"/>
<dbReference type="InParanoid" id="C9JLJ4"/>
<dbReference type="OMA" id="GTHFLWA"/>
<dbReference type="OrthoDB" id="9523253at2759"/>
<dbReference type="PAN-GO" id="C9JLJ4">
    <property type="GO annotations" value="6 GO annotations based on evolutionary models"/>
</dbReference>
<dbReference type="PhylomeDB" id="C9JLJ4"/>
<dbReference type="PathwayCommons" id="C9JLJ4"/>
<dbReference type="Reactome" id="R-HSA-5689880">
    <property type="pathway name" value="Ub-specific processing proteases"/>
</dbReference>
<dbReference type="BioGRID-ORCS" id="100287238">
    <property type="hits" value="22 hits in 1025 CRISPR screens"/>
</dbReference>
<dbReference type="GenomeRNAi" id="100287238"/>
<dbReference type="Pharos" id="C9JLJ4">
    <property type="development level" value="Tdark"/>
</dbReference>
<dbReference type="PRO" id="PR:C9JLJ4"/>
<dbReference type="Proteomes" id="UP000005640">
    <property type="component" value="Chromosome 4"/>
</dbReference>
<dbReference type="RNAct" id="C9JLJ4">
    <property type="molecule type" value="protein"/>
</dbReference>
<dbReference type="GO" id="GO:0005829">
    <property type="term" value="C:cytosol"/>
    <property type="evidence" value="ECO:0000318"/>
    <property type="project" value="GO_Central"/>
</dbReference>
<dbReference type="GO" id="GO:0005783">
    <property type="term" value="C:endoplasmic reticulum"/>
    <property type="evidence" value="ECO:0007669"/>
    <property type="project" value="UniProtKB-SubCell"/>
</dbReference>
<dbReference type="GO" id="GO:0005634">
    <property type="term" value="C:nucleus"/>
    <property type="evidence" value="ECO:0000318"/>
    <property type="project" value="GO_Central"/>
</dbReference>
<dbReference type="GO" id="GO:0004843">
    <property type="term" value="F:cysteine-type deubiquitinase activity"/>
    <property type="evidence" value="ECO:0000318"/>
    <property type="project" value="GO_Central"/>
</dbReference>
<dbReference type="GO" id="GO:0016579">
    <property type="term" value="P:protein deubiquitination"/>
    <property type="evidence" value="ECO:0007669"/>
    <property type="project" value="InterPro"/>
</dbReference>
<dbReference type="GO" id="GO:0006508">
    <property type="term" value="P:proteolysis"/>
    <property type="evidence" value="ECO:0007669"/>
    <property type="project" value="UniProtKB-KW"/>
</dbReference>
<dbReference type="GO" id="GO:0042981">
    <property type="term" value="P:regulation of apoptotic process"/>
    <property type="evidence" value="ECO:0000318"/>
    <property type="project" value="GO_Central"/>
</dbReference>
<dbReference type="GO" id="GO:0031647">
    <property type="term" value="P:regulation of protein stability"/>
    <property type="evidence" value="ECO:0000318"/>
    <property type="project" value="GO_Central"/>
</dbReference>
<dbReference type="CDD" id="cd02661">
    <property type="entry name" value="Peptidase_C19E"/>
    <property type="match status" value="1"/>
</dbReference>
<dbReference type="FunFam" id="3.90.70.10:FF:000070">
    <property type="entry name" value="Ubiquitin carboxyl-terminal hydrolase 17-like protein 17"/>
    <property type="match status" value="1"/>
</dbReference>
<dbReference type="Gene3D" id="3.90.70.10">
    <property type="entry name" value="Cysteine proteinases"/>
    <property type="match status" value="1"/>
</dbReference>
<dbReference type="InterPro" id="IPR038765">
    <property type="entry name" value="Papain-like_cys_pep_sf"/>
</dbReference>
<dbReference type="InterPro" id="IPR050164">
    <property type="entry name" value="Peptidase_C19"/>
</dbReference>
<dbReference type="InterPro" id="IPR001394">
    <property type="entry name" value="Peptidase_C19_UCH"/>
</dbReference>
<dbReference type="InterPro" id="IPR018200">
    <property type="entry name" value="USP_CS"/>
</dbReference>
<dbReference type="InterPro" id="IPR028889">
    <property type="entry name" value="USP_dom"/>
</dbReference>
<dbReference type="PANTHER" id="PTHR24006:SF651">
    <property type="entry name" value="INACTIVE UBIQUITIN CARBOXYL-TERMINAL HYDROLASE 17-LIKE PROTEIN 4-RELATED"/>
    <property type="match status" value="1"/>
</dbReference>
<dbReference type="PANTHER" id="PTHR24006">
    <property type="entry name" value="UBIQUITIN CARBOXYL-TERMINAL HYDROLASE"/>
    <property type="match status" value="1"/>
</dbReference>
<dbReference type="Pfam" id="PF00443">
    <property type="entry name" value="UCH"/>
    <property type="match status" value="1"/>
</dbReference>
<dbReference type="SUPFAM" id="SSF54001">
    <property type="entry name" value="Cysteine proteinases"/>
    <property type="match status" value="1"/>
</dbReference>
<dbReference type="PROSITE" id="PS00972">
    <property type="entry name" value="USP_1"/>
    <property type="match status" value="1"/>
</dbReference>
<dbReference type="PROSITE" id="PS00973">
    <property type="entry name" value="USP_2"/>
    <property type="match status" value="1"/>
</dbReference>
<dbReference type="PROSITE" id="PS50235">
    <property type="entry name" value="USP_3"/>
    <property type="match status" value="1"/>
</dbReference>
<organism>
    <name type="scientific">Homo sapiens</name>
    <name type="common">Human</name>
    <dbReference type="NCBI Taxonomy" id="9606"/>
    <lineage>
        <taxon>Eukaryota</taxon>
        <taxon>Metazoa</taxon>
        <taxon>Chordata</taxon>
        <taxon>Craniata</taxon>
        <taxon>Vertebrata</taxon>
        <taxon>Euteleostomi</taxon>
        <taxon>Mammalia</taxon>
        <taxon>Eutheria</taxon>
        <taxon>Euarchontoglires</taxon>
        <taxon>Primates</taxon>
        <taxon>Haplorrhini</taxon>
        <taxon>Catarrhini</taxon>
        <taxon>Hominidae</taxon>
        <taxon>Homo</taxon>
    </lineage>
</organism>
<proteinExistence type="inferred from homology"/>
<comment type="function">
    <text evidence="1">Deubiquitinating enzyme that removes conjugated ubiquitin from specific proteins to regulate different cellular processes that may include cell proliferation, progression through the cell cycle, apoptosis, cell migration, and the cellular response to viral infection.</text>
</comment>
<comment type="catalytic activity">
    <reaction>
        <text>Thiol-dependent hydrolysis of ester, thioester, amide, peptide and isopeptide bonds formed by the C-terminal Gly of ubiquitin (a 76-residue protein attached to proteins as an intracellular targeting signal).</text>
        <dbReference type="EC" id="3.4.19.12"/>
    </reaction>
</comment>
<comment type="subcellular location">
    <subcellularLocation>
        <location evidence="1">Nucleus</location>
    </subcellularLocation>
    <subcellularLocation>
        <location evidence="1">Endoplasmic reticulum</location>
    </subcellularLocation>
</comment>
<comment type="similarity">
    <text evidence="5">Belongs to the peptidase C19 family. USP17 subfamily.</text>
</comment>
<comment type="caution">
    <text evidence="5">The RS447 megasatellite DNA is a highly polymorphic conserved tandem repetitive sequence which contains a copy of the USP17 gene. It is present with an interindividual variation in copy number, ranging from 20 to 103, and can be found in the genome on chromosome 4 and chromosome 8. The high similarity between the UPS17-like genes makes it impossible to specifically assign data to a particular gene of the family. Oligonucleotides designed in RNAi experiments are for instance not specific for a given UPS17-like gene.</text>
</comment>
<sequence>MEEDSLYLGGEWQFNHFSKLTSSRLDAAFAEIQRTSLPEKSPLSCETRVDLCDDLVPEARQLAPREKLPLSSRRPAAVGAGLQNMGNTCYVNASLQCLTYTPPLANYMLSREHSQTCHRHKGCMLCTMQAHITRALHNPGHVIQPSQALAAGFHRGKQEDAHEFLMFTVDAMKKACLPGHKQVDHPSKDTTLIHQIFGGYWRSQIKCLHCHGISDTFDPYLDIALDIQAAQSVQQALEQLVKPEELNGENAYHCGVCLQRAPASKTLTLHTSAKVLILVLKRFSDVTGNKIAKNVQYPECLDMQPYMSQQNTGPLVYVLYAVLVHAGWSCHNGHYFSYVKAQEGQWYKMDDAEVTAASITSVLSQQAYVLFYIQKSEWERHSESVSRGREPRALGAEDTDRRATQGELKRDHPCLQAPELDEHLVERATQESTLDRWKFLQEQNKTKPEFNVRKVEGTLPPDVLVIHQSKYKCGMKNHHPEQQSSLLNLSSSTPTHQESMNTGTLASLRGRARRSKGKNKHSKRALLVCQ</sequence>